<name>YO19A_YEAST</name>
<keyword id="KW-1185">Reference proteome</keyword>
<protein>
    <recommendedName>
        <fullName>Uncharacterized protein YOL019W-A</fullName>
    </recommendedName>
</protein>
<dbReference type="EMBL" id="Z74761">
    <property type="status" value="NOT_ANNOTATED_CDS"/>
    <property type="molecule type" value="Genomic_DNA"/>
</dbReference>
<dbReference type="EMBL" id="AF479913">
    <property type="protein sequence ID" value="AAL79226.1"/>
    <property type="molecule type" value="Genomic_DNA"/>
</dbReference>
<dbReference type="EMBL" id="BK006948">
    <property type="protein sequence ID" value="DAA10762.1"/>
    <property type="molecule type" value="Genomic_DNA"/>
</dbReference>
<dbReference type="RefSeq" id="NP_878165.1">
    <property type="nucleotide sequence ID" value="NM_001184622.1"/>
</dbReference>
<dbReference type="BioGRID" id="37019">
    <property type="interactions" value="24"/>
</dbReference>
<dbReference type="FunCoup" id="Q8TGS2">
    <property type="interactions" value="14"/>
</dbReference>
<dbReference type="STRING" id="4932.YOL019W-A"/>
<dbReference type="PaxDb" id="4932-YOL019W-A"/>
<dbReference type="EnsemblFungi" id="YOL019W-A_mRNA">
    <property type="protein sequence ID" value="YOL019W-A"/>
    <property type="gene ID" value="YOL019W-A"/>
</dbReference>
<dbReference type="GeneID" id="1466477"/>
<dbReference type="KEGG" id="sce:YOL019W-A"/>
<dbReference type="AGR" id="SGD:S000028707"/>
<dbReference type="SGD" id="S000028707">
    <property type="gene designation" value="YOL019W-A"/>
</dbReference>
<dbReference type="VEuPathDB" id="FungiDB:YOL019W-A"/>
<dbReference type="HOGENOM" id="CLU_3125881_0_0_1"/>
<dbReference type="InParanoid" id="Q8TGS2"/>
<dbReference type="OrthoDB" id="10269500at2759"/>
<dbReference type="BioCyc" id="YEAST:G3O-33905-MONOMER"/>
<dbReference type="BioGRID-ORCS" id="1466477">
    <property type="hits" value="0 hits in 10 CRISPR screens"/>
</dbReference>
<dbReference type="PRO" id="PR:Q8TGS2"/>
<dbReference type="Proteomes" id="UP000002311">
    <property type="component" value="Chromosome XV"/>
</dbReference>
<sequence length="50" mass="5710">MSNTFVAVEFSWLYAISLILPCETIRVAWAPKRAYHGTSEEKRRLAPADI</sequence>
<proteinExistence type="predicted"/>
<reference key="1">
    <citation type="journal article" date="1997" name="Nature">
        <title>The nucleotide sequence of Saccharomyces cerevisiae chromosome XV.</title>
        <authorList>
            <person name="Dujon B."/>
            <person name="Albermann K."/>
            <person name="Aldea M."/>
            <person name="Alexandraki D."/>
            <person name="Ansorge W."/>
            <person name="Arino J."/>
            <person name="Benes V."/>
            <person name="Bohn C."/>
            <person name="Bolotin-Fukuhara M."/>
            <person name="Bordonne R."/>
            <person name="Boyer J."/>
            <person name="Camasses A."/>
            <person name="Casamayor A."/>
            <person name="Casas C."/>
            <person name="Cheret G."/>
            <person name="Cziepluch C."/>
            <person name="Daignan-Fornier B."/>
            <person name="Dang V.-D."/>
            <person name="de Haan M."/>
            <person name="Delius H."/>
            <person name="Durand P."/>
            <person name="Fairhead C."/>
            <person name="Feldmann H."/>
            <person name="Gaillon L."/>
            <person name="Galisson F."/>
            <person name="Gamo F.-J."/>
            <person name="Gancedo C."/>
            <person name="Goffeau A."/>
            <person name="Goulding S.E."/>
            <person name="Grivell L.A."/>
            <person name="Habbig B."/>
            <person name="Hand N.J."/>
            <person name="Hani J."/>
            <person name="Hattenhorst U."/>
            <person name="Hebling U."/>
            <person name="Hernando Y."/>
            <person name="Herrero E."/>
            <person name="Heumann K."/>
            <person name="Hiesel R."/>
            <person name="Hilger F."/>
            <person name="Hofmann B."/>
            <person name="Hollenberg C.P."/>
            <person name="Hughes B."/>
            <person name="Jauniaux J.-C."/>
            <person name="Kalogeropoulos A."/>
            <person name="Katsoulou C."/>
            <person name="Kordes E."/>
            <person name="Lafuente M.J."/>
            <person name="Landt O."/>
            <person name="Louis E.J."/>
            <person name="Maarse A.C."/>
            <person name="Madania A."/>
            <person name="Mannhaupt G."/>
            <person name="Marck C."/>
            <person name="Martin R.P."/>
            <person name="Mewes H.-W."/>
            <person name="Michaux G."/>
            <person name="Paces V."/>
            <person name="Parle-McDermott A.G."/>
            <person name="Pearson B.M."/>
            <person name="Perrin A."/>
            <person name="Pettersson B."/>
            <person name="Poch O."/>
            <person name="Pohl T.M."/>
            <person name="Poirey R."/>
            <person name="Portetelle D."/>
            <person name="Pujol A."/>
            <person name="Purnelle B."/>
            <person name="Ramezani Rad M."/>
            <person name="Rechmann S."/>
            <person name="Schwager C."/>
            <person name="Schweizer M."/>
            <person name="Sor F."/>
            <person name="Sterky F."/>
            <person name="Tarassov I.A."/>
            <person name="Teodoru C."/>
            <person name="Tettelin H."/>
            <person name="Thierry A."/>
            <person name="Tobiasch E."/>
            <person name="Tzermia M."/>
            <person name="Uhlen M."/>
            <person name="Unseld M."/>
            <person name="Valens M."/>
            <person name="Vandenbol M."/>
            <person name="Vetter I."/>
            <person name="Vlcek C."/>
            <person name="Voet M."/>
            <person name="Volckaert G."/>
            <person name="Voss H."/>
            <person name="Wambutt R."/>
            <person name="Wedler H."/>
            <person name="Wiemann S."/>
            <person name="Winsor B."/>
            <person name="Wolfe K.H."/>
            <person name="Zollner A."/>
            <person name="Zumstein E."/>
            <person name="Kleine K."/>
        </authorList>
    </citation>
    <scope>NUCLEOTIDE SEQUENCE [LARGE SCALE GENOMIC DNA]</scope>
    <source>
        <strain>ATCC 204508 / S288c</strain>
    </source>
</reference>
<reference key="2">
    <citation type="journal article" date="2014" name="G3 (Bethesda)">
        <title>The reference genome sequence of Saccharomyces cerevisiae: Then and now.</title>
        <authorList>
            <person name="Engel S.R."/>
            <person name="Dietrich F.S."/>
            <person name="Fisk D.G."/>
            <person name="Binkley G."/>
            <person name="Balakrishnan R."/>
            <person name="Costanzo M.C."/>
            <person name="Dwight S.S."/>
            <person name="Hitz B.C."/>
            <person name="Karra K."/>
            <person name="Nash R.S."/>
            <person name="Weng S."/>
            <person name="Wong E.D."/>
            <person name="Lloyd P."/>
            <person name="Skrzypek M.S."/>
            <person name="Miyasato S.R."/>
            <person name="Simison M."/>
            <person name="Cherry J.M."/>
        </authorList>
    </citation>
    <scope>GENOME REANNOTATION</scope>
    <source>
        <strain>ATCC 204508 / S288c</strain>
    </source>
</reference>
<reference key="3">
    <citation type="journal article" date="2002" name="Nat. Biotechnol.">
        <title>An integrated approach for finding overlooked genes in yeast.</title>
        <authorList>
            <person name="Kumar A."/>
            <person name="Harrison P.M."/>
            <person name="Cheung K.-H."/>
            <person name="Lan N."/>
            <person name="Echols N."/>
            <person name="Bertone P."/>
            <person name="Miller P."/>
            <person name="Gerstein M.B."/>
            <person name="Snyder M."/>
        </authorList>
    </citation>
    <scope>NUCLEOTIDE SEQUENCE [GENOMIC DNA]</scope>
</reference>
<accession>Q8TGS2</accession>
<accession>D6W246</accession>
<gene>
    <name type="ordered locus">YOL019W-A</name>
</gene>
<feature type="chain" id="PRO_0000245273" description="Uncharacterized protein YOL019W-A">
    <location>
        <begin position="1"/>
        <end position="50"/>
    </location>
</feature>
<organism>
    <name type="scientific">Saccharomyces cerevisiae (strain ATCC 204508 / S288c)</name>
    <name type="common">Baker's yeast</name>
    <dbReference type="NCBI Taxonomy" id="559292"/>
    <lineage>
        <taxon>Eukaryota</taxon>
        <taxon>Fungi</taxon>
        <taxon>Dikarya</taxon>
        <taxon>Ascomycota</taxon>
        <taxon>Saccharomycotina</taxon>
        <taxon>Saccharomycetes</taxon>
        <taxon>Saccharomycetales</taxon>
        <taxon>Saccharomycetaceae</taxon>
        <taxon>Saccharomyces</taxon>
    </lineage>
</organism>